<evidence type="ECO:0000255" key="1">
    <source>
        <dbReference type="HAMAP-Rule" id="MF_00528"/>
    </source>
</evidence>
<protein>
    <recommendedName>
        <fullName evidence="1">dTTP/UTP pyrophosphatase</fullName>
        <shortName evidence="1">dTTPase/UTPase</shortName>
        <ecNumber evidence="1">3.6.1.9</ecNumber>
    </recommendedName>
    <alternativeName>
        <fullName evidence="1">Nucleoside triphosphate pyrophosphatase</fullName>
    </alternativeName>
    <alternativeName>
        <fullName evidence="1">Nucleotide pyrophosphatase</fullName>
        <shortName evidence="1">Nucleotide PPase</shortName>
    </alternativeName>
</protein>
<comment type="function">
    <text evidence="1">Nucleoside triphosphate pyrophosphatase that hydrolyzes dTTP and UTP. May have a dual role in cell division arrest and in preventing the incorporation of modified nucleotides into cellular nucleic acids.</text>
</comment>
<comment type="catalytic activity">
    <reaction evidence="1">
        <text>dTTP + H2O = dTMP + diphosphate + H(+)</text>
        <dbReference type="Rhea" id="RHEA:28534"/>
        <dbReference type="ChEBI" id="CHEBI:15377"/>
        <dbReference type="ChEBI" id="CHEBI:15378"/>
        <dbReference type="ChEBI" id="CHEBI:33019"/>
        <dbReference type="ChEBI" id="CHEBI:37568"/>
        <dbReference type="ChEBI" id="CHEBI:63528"/>
        <dbReference type="EC" id="3.6.1.9"/>
    </reaction>
</comment>
<comment type="catalytic activity">
    <reaction evidence="1">
        <text>UTP + H2O = UMP + diphosphate + H(+)</text>
        <dbReference type="Rhea" id="RHEA:29395"/>
        <dbReference type="ChEBI" id="CHEBI:15377"/>
        <dbReference type="ChEBI" id="CHEBI:15378"/>
        <dbReference type="ChEBI" id="CHEBI:33019"/>
        <dbReference type="ChEBI" id="CHEBI:46398"/>
        <dbReference type="ChEBI" id="CHEBI:57865"/>
        <dbReference type="EC" id="3.6.1.9"/>
    </reaction>
</comment>
<comment type="cofactor">
    <cofactor evidence="1">
        <name>a divalent metal cation</name>
        <dbReference type="ChEBI" id="CHEBI:60240"/>
    </cofactor>
</comment>
<comment type="subcellular location">
    <subcellularLocation>
        <location evidence="1">Cytoplasm</location>
    </subcellularLocation>
</comment>
<comment type="similarity">
    <text evidence="1">Belongs to the Maf family. YhdE subfamily.</text>
</comment>
<sequence>MRKVVLASASPRRKELLSKLIGNNFEVCVSSYEETPLQEMNVEELVVFHSLEKAKDVALRFDSGIIISADTVVFCDGAILGKPHTLNNAKEMLENISGKSVLAITGMTILDMDSGKCVSEYVSTDVNMKQMSSDEIASYVNSGEPLDKAGAFAIQGKGAVLVESINGDFFNVVGLPLFRLGTILEEMGISIFDDC</sequence>
<feature type="chain" id="PRO_0000267480" description="dTTP/UTP pyrophosphatase">
    <location>
        <begin position="1"/>
        <end position="195"/>
    </location>
</feature>
<feature type="active site" description="Proton acceptor" evidence="1">
    <location>
        <position position="70"/>
    </location>
</feature>
<feature type="site" description="Important for substrate specificity" evidence="1">
    <location>
        <position position="12"/>
    </location>
</feature>
<feature type="site" description="Important for substrate specificity" evidence="1">
    <location>
        <position position="71"/>
    </location>
</feature>
<feature type="site" description="Important for substrate specificity" evidence="1">
    <location>
        <position position="155"/>
    </location>
</feature>
<organism>
    <name type="scientific">Methanococcoides burtonii (strain DSM 6242 / NBRC 107633 / OCM 468 / ACE-M)</name>
    <dbReference type="NCBI Taxonomy" id="259564"/>
    <lineage>
        <taxon>Archaea</taxon>
        <taxon>Methanobacteriati</taxon>
        <taxon>Methanobacteriota</taxon>
        <taxon>Stenosarchaea group</taxon>
        <taxon>Methanomicrobia</taxon>
        <taxon>Methanosarcinales</taxon>
        <taxon>Methanosarcinaceae</taxon>
        <taxon>Methanococcoides</taxon>
    </lineage>
</organism>
<reference key="1">
    <citation type="journal article" date="2009" name="ISME J.">
        <title>The genome sequence of the psychrophilic archaeon, Methanococcoides burtonii: the role of genome evolution in cold adaptation.</title>
        <authorList>
            <person name="Allen M.A."/>
            <person name="Lauro F.M."/>
            <person name="Williams T.J."/>
            <person name="Burg D."/>
            <person name="Siddiqui K.S."/>
            <person name="De Francisci D."/>
            <person name="Chong K.W."/>
            <person name="Pilak O."/>
            <person name="Chew H.H."/>
            <person name="De Maere M.Z."/>
            <person name="Ting L."/>
            <person name="Katrib M."/>
            <person name="Ng C."/>
            <person name="Sowers K.R."/>
            <person name="Galperin M.Y."/>
            <person name="Anderson I.J."/>
            <person name="Ivanova N."/>
            <person name="Dalin E."/>
            <person name="Martinez M."/>
            <person name="Lapidus A."/>
            <person name="Hauser L."/>
            <person name="Land M."/>
            <person name="Thomas T."/>
            <person name="Cavicchioli R."/>
        </authorList>
    </citation>
    <scope>NUCLEOTIDE SEQUENCE [LARGE SCALE GENOMIC DNA]</scope>
    <source>
        <strain>DSM 6242 / NBRC 107633 / OCM 468 / ACE-M</strain>
    </source>
</reference>
<accession>Q12TU6</accession>
<keyword id="KW-0963">Cytoplasm</keyword>
<keyword id="KW-0378">Hydrolase</keyword>
<keyword id="KW-0546">Nucleotide metabolism</keyword>
<gene>
    <name type="ordered locus">Mbur_2269</name>
</gene>
<name>NTPPA_METBU</name>
<proteinExistence type="inferred from homology"/>
<dbReference type="EC" id="3.6.1.9" evidence="1"/>
<dbReference type="EMBL" id="CP000300">
    <property type="protein sequence ID" value="ABE53130.1"/>
    <property type="molecule type" value="Genomic_DNA"/>
</dbReference>
<dbReference type="RefSeq" id="WP_011500266.1">
    <property type="nucleotide sequence ID" value="NC_007955.1"/>
</dbReference>
<dbReference type="SMR" id="Q12TU6"/>
<dbReference type="STRING" id="259564.Mbur_2269"/>
<dbReference type="GeneID" id="3997223"/>
<dbReference type="KEGG" id="mbu:Mbur_2269"/>
<dbReference type="HOGENOM" id="CLU_040416_0_0_2"/>
<dbReference type="OrthoDB" id="45223at2157"/>
<dbReference type="Proteomes" id="UP000001979">
    <property type="component" value="Chromosome"/>
</dbReference>
<dbReference type="GO" id="GO:0005737">
    <property type="term" value="C:cytoplasm"/>
    <property type="evidence" value="ECO:0007669"/>
    <property type="project" value="UniProtKB-SubCell"/>
</dbReference>
<dbReference type="GO" id="GO:0036218">
    <property type="term" value="F:dTTP diphosphatase activity"/>
    <property type="evidence" value="ECO:0007669"/>
    <property type="project" value="RHEA"/>
</dbReference>
<dbReference type="GO" id="GO:0036221">
    <property type="term" value="F:UTP diphosphatase activity"/>
    <property type="evidence" value="ECO:0007669"/>
    <property type="project" value="RHEA"/>
</dbReference>
<dbReference type="GO" id="GO:0009117">
    <property type="term" value="P:nucleotide metabolic process"/>
    <property type="evidence" value="ECO:0007669"/>
    <property type="project" value="UniProtKB-KW"/>
</dbReference>
<dbReference type="CDD" id="cd00555">
    <property type="entry name" value="Maf"/>
    <property type="match status" value="1"/>
</dbReference>
<dbReference type="Gene3D" id="3.90.950.10">
    <property type="match status" value="1"/>
</dbReference>
<dbReference type="HAMAP" id="MF_00528">
    <property type="entry name" value="Maf"/>
    <property type="match status" value="1"/>
</dbReference>
<dbReference type="InterPro" id="IPR029001">
    <property type="entry name" value="ITPase-like_fam"/>
</dbReference>
<dbReference type="InterPro" id="IPR003697">
    <property type="entry name" value="Maf-like"/>
</dbReference>
<dbReference type="NCBIfam" id="TIGR00172">
    <property type="entry name" value="maf"/>
    <property type="match status" value="1"/>
</dbReference>
<dbReference type="NCBIfam" id="NF010945">
    <property type="entry name" value="PRK14365.1"/>
    <property type="match status" value="1"/>
</dbReference>
<dbReference type="PANTHER" id="PTHR43213">
    <property type="entry name" value="BIFUNCTIONAL DTTP/UTP PYROPHOSPHATASE/METHYLTRANSFERASE PROTEIN-RELATED"/>
    <property type="match status" value="1"/>
</dbReference>
<dbReference type="PANTHER" id="PTHR43213:SF5">
    <property type="entry name" value="BIFUNCTIONAL DTTP_UTP PYROPHOSPHATASE_METHYLTRANSFERASE PROTEIN-RELATED"/>
    <property type="match status" value="1"/>
</dbReference>
<dbReference type="Pfam" id="PF02545">
    <property type="entry name" value="Maf"/>
    <property type="match status" value="1"/>
</dbReference>
<dbReference type="PIRSF" id="PIRSF006305">
    <property type="entry name" value="Maf"/>
    <property type="match status" value="1"/>
</dbReference>
<dbReference type="SUPFAM" id="SSF52972">
    <property type="entry name" value="ITPase-like"/>
    <property type="match status" value="1"/>
</dbReference>